<sequence>MENILDFTLEELKEWLISKEEKAFRAKQVFDWIYNKLIFDFNNMKNIPYKTKNLLSDNFYVGVPKVVKKLMSQDKNTYKFLFEYKDGNIIESVVMKYKHGNSICVSTQVGCRMGCKFCASTLDGVIRNLTSGEILSQIMAAQKEIGERISNVVLMGSGEPLDNFENVTKFLDLVTSDTTLNIGQRHITLSTCGIVPKIKELADKNYNITLAISLHSPEDLLRKEMMPIANKYSIKELMEACDYYINKTNRRITFEYALVKGKNDSIKEAKKLSTVLKGKLCHVNLIPVNEIKENSYEKSTLKNIESFGNILKENGIETTIRREMGADINAACGQLRRSYVSK</sequence>
<name>RLMN_CLOB1</name>
<feature type="chain" id="PRO_0000350113" description="Probable dual-specificity RNA methyltransferase RlmN">
    <location>
        <begin position="1"/>
        <end position="342"/>
    </location>
</feature>
<feature type="domain" description="Radical SAM core" evidence="2">
    <location>
        <begin position="97"/>
        <end position="327"/>
    </location>
</feature>
<feature type="active site" description="Proton acceptor" evidence="1">
    <location>
        <position position="91"/>
    </location>
</feature>
<feature type="active site" description="S-methylcysteine intermediate" evidence="1">
    <location>
        <position position="332"/>
    </location>
</feature>
<feature type="binding site" evidence="1">
    <location>
        <position position="111"/>
    </location>
    <ligand>
        <name>[4Fe-4S] cluster</name>
        <dbReference type="ChEBI" id="CHEBI:49883"/>
        <note>4Fe-4S-S-AdoMet</note>
    </ligand>
</feature>
<feature type="binding site" evidence="1">
    <location>
        <position position="115"/>
    </location>
    <ligand>
        <name>[4Fe-4S] cluster</name>
        <dbReference type="ChEBI" id="CHEBI:49883"/>
        <note>4Fe-4S-S-AdoMet</note>
    </ligand>
</feature>
<feature type="binding site" evidence="1">
    <location>
        <position position="118"/>
    </location>
    <ligand>
        <name>[4Fe-4S] cluster</name>
        <dbReference type="ChEBI" id="CHEBI:49883"/>
        <note>4Fe-4S-S-AdoMet</note>
    </ligand>
</feature>
<feature type="binding site" evidence="1">
    <location>
        <begin position="158"/>
        <end position="159"/>
    </location>
    <ligand>
        <name>S-adenosyl-L-methionine</name>
        <dbReference type="ChEBI" id="CHEBI:59789"/>
    </ligand>
</feature>
<feature type="binding site" evidence="1">
    <location>
        <position position="190"/>
    </location>
    <ligand>
        <name>S-adenosyl-L-methionine</name>
        <dbReference type="ChEBI" id="CHEBI:59789"/>
    </ligand>
</feature>
<feature type="binding site" evidence="1">
    <location>
        <begin position="213"/>
        <end position="215"/>
    </location>
    <ligand>
        <name>S-adenosyl-L-methionine</name>
        <dbReference type="ChEBI" id="CHEBI:59789"/>
    </ligand>
</feature>
<feature type="binding site" evidence="1">
    <location>
        <position position="289"/>
    </location>
    <ligand>
        <name>S-adenosyl-L-methionine</name>
        <dbReference type="ChEBI" id="CHEBI:59789"/>
    </ligand>
</feature>
<feature type="disulfide bond" description="(transient)" evidence="1">
    <location>
        <begin position="104"/>
        <end position="332"/>
    </location>
</feature>
<protein>
    <recommendedName>
        <fullName evidence="1">Probable dual-specificity RNA methyltransferase RlmN</fullName>
        <ecNumber evidence="1">2.1.1.192</ecNumber>
    </recommendedName>
    <alternativeName>
        <fullName evidence="1">23S rRNA (adenine(2503)-C(2))-methyltransferase</fullName>
    </alternativeName>
    <alternativeName>
        <fullName evidence="1">23S rRNA m2A2503 methyltransferase</fullName>
    </alternativeName>
    <alternativeName>
        <fullName evidence="1">Ribosomal RNA large subunit methyltransferase N</fullName>
    </alternativeName>
    <alternativeName>
        <fullName evidence="1">tRNA (adenine(37)-C(2))-methyltransferase</fullName>
    </alternativeName>
    <alternativeName>
        <fullName evidence="1">tRNA m2A37 methyltransferase</fullName>
    </alternativeName>
</protein>
<comment type="function">
    <text evidence="1">Specifically methylates position 2 of adenine 2503 in 23S rRNA and position 2 of adenine 37 in tRNAs.</text>
</comment>
<comment type="catalytic activity">
    <reaction evidence="1">
        <text>adenosine(2503) in 23S rRNA + 2 reduced [2Fe-2S]-[ferredoxin] + 2 S-adenosyl-L-methionine = 2-methyladenosine(2503) in 23S rRNA + 5'-deoxyadenosine + L-methionine + 2 oxidized [2Fe-2S]-[ferredoxin] + S-adenosyl-L-homocysteine</text>
        <dbReference type="Rhea" id="RHEA:42916"/>
        <dbReference type="Rhea" id="RHEA-COMP:10000"/>
        <dbReference type="Rhea" id="RHEA-COMP:10001"/>
        <dbReference type="Rhea" id="RHEA-COMP:10152"/>
        <dbReference type="Rhea" id="RHEA-COMP:10282"/>
        <dbReference type="ChEBI" id="CHEBI:17319"/>
        <dbReference type="ChEBI" id="CHEBI:33737"/>
        <dbReference type="ChEBI" id="CHEBI:33738"/>
        <dbReference type="ChEBI" id="CHEBI:57844"/>
        <dbReference type="ChEBI" id="CHEBI:57856"/>
        <dbReference type="ChEBI" id="CHEBI:59789"/>
        <dbReference type="ChEBI" id="CHEBI:74411"/>
        <dbReference type="ChEBI" id="CHEBI:74497"/>
        <dbReference type="EC" id="2.1.1.192"/>
    </reaction>
</comment>
<comment type="catalytic activity">
    <reaction evidence="1">
        <text>adenosine(37) in tRNA + 2 reduced [2Fe-2S]-[ferredoxin] + 2 S-adenosyl-L-methionine = 2-methyladenosine(37) in tRNA + 5'-deoxyadenosine + L-methionine + 2 oxidized [2Fe-2S]-[ferredoxin] + S-adenosyl-L-homocysteine</text>
        <dbReference type="Rhea" id="RHEA:43332"/>
        <dbReference type="Rhea" id="RHEA-COMP:10000"/>
        <dbReference type="Rhea" id="RHEA-COMP:10001"/>
        <dbReference type="Rhea" id="RHEA-COMP:10162"/>
        <dbReference type="Rhea" id="RHEA-COMP:10485"/>
        <dbReference type="ChEBI" id="CHEBI:17319"/>
        <dbReference type="ChEBI" id="CHEBI:33737"/>
        <dbReference type="ChEBI" id="CHEBI:33738"/>
        <dbReference type="ChEBI" id="CHEBI:57844"/>
        <dbReference type="ChEBI" id="CHEBI:57856"/>
        <dbReference type="ChEBI" id="CHEBI:59789"/>
        <dbReference type="ChEBI" id="CHEBI:74411"/>
        <dbReference type="ChEBI" id="CHEBI:74497"/>
        <dbReference type="EC" id="2.1.1.192"/>
    </reaction>
</comment>
<comment type="cofactor">
    <cofactor evidence="1">
        <name>[4Fe-4S] cluster</name>
        <dbReference type="ChEBI" id="CHEBI:49883"/>
    </cofactor>
    <text evidence="1">Binds 1 [4Fe-4S] cluster. The cluster is coordinated with 3 cysteines and an exchangeable S-adenosyl-L-methionine.</text>
</comment>
<comment type="subcellular location">
    <subcellularLocation>
        <location evidence="1">Cytoplasm</location>
    </subcellularLocation>
</comment>
<comment type="miscellaneous">
    <text evidence="1">Reaction proceeds by a ping-pong mechanism involving intermediate methylation of a conserved cysteine residue.</text>
</comment>
<comment type="similarity">
    <text evidence="1">Belongs to the radical SAM superfamily. RlmN family.</text>
</comment>
<dbReference type="EC" id="2.1.1.192" evidence="1"/>
<dbReference type="EMBL" id="CP000726">
    <property type="protein sequence ID" value="ABS34534.1"/>
    <property type="molecule type" value="Genomic_DNA"/>
</dbReference>
<dbReference type="RefSeq" id="WP_011986842.1">
    <property type="nucleotide sequence ID" value="NC_009697.1"/>
</dbReference>
<dbReference type="SMR" id="A7FW72"/>
<dbReference type="GeneID" id="5186761"/>
<dbReference type="KEGG" id="cba:CLB_2379"/>
<dbReference type="HOGENOM" id="CLU_029101_0_1_9"/>
<dbReference type="GO" id="GO:0005737">
    <property type="term" value="C:cytoplasm"/>
    <property type="evidence" value="ECO:0007669"/>
    <property type="project" value="UniProtKB-SubCell"/>
</dbReference>
<dbReference type="GO" id="GO:0051539">
    <property type="term" value="F:4 iron, 4 sulfur cluster binding"/>
    <property type="evidence" value="ECO:0007669"/>
    <property type="project" value="UniProtKB-UniRule"/>
</dbReference>
<dbReference type="GO" id="GO:0046872">
    <property type="term" value="F:metal ion binding"/>
    <property type="evidence" value="ECO:0007669"/>
    <property type="project" value="UniProtKB-KW"/>
</dbReference>
<dbReference type="GO" id="GO:0070040">
    <property type="term" value="F:rRNA (adenine(2503)-C2-)-methyltransferase activity"/>
    <property type="evidence" value="ECO:0007669"/>
    <property type="project" value="UniProtKB-UniRule"/>
</dbReference>
<dbReference type="GO" id="GO:0019843">
    <property type="term" value="F:rRNA binding"/>
    <property type="evidence" value="ECO:0007669"/>
    <property type="project" value="UniProtKB-UniRule"/>
</dbReference>
<dbReference type="GO" id="GO:0002935">
    <property type="term" value="F:tRNA (adenine(37)-C2)-methyltransferase activity"/>
    <property type="evidence" value="ECO:0007669"/>
    <property type="project" value="UniProtKB-UniRule"/>
</dbReference>
<dbReference type="GO" id="GO:0000049">
    <property type="term" value="F:tRNA binding"/>
    <property type="evidence" value="ECO:0007669"/>
    <property type="project" value="UniProtKB-UniRule"/>
</dbReference>
<dbReference type="GO" id="GO:0070475">
    <property type="term" value="P:rRNA base methylation"/>
    <property type="evidence" value="ECO:0007669"/>
    <property type="project" value="UniProtKB-UniRule"/>
</dbReference>
<dbReference type="GO" id="GO:0030488">
    <property type="term" value="P:tRNA methylation"/>
    <property type="evidence" value="ECO:0007669"/>
    <property type="project" value="UniProtKB-UniRule"/>
</dbReference>
<dbReference type="CDD" id="cd01335">
    <property type="entry name" value="Radical_SAM"/>
    <property type="match status" value="1"/>
</dbReference>
<dbReference type="FunFam" id="3.20.20.70:FF:000014">
    <property type="entry name" value="Probable dual-specificity RNA methyltransferase RlmN"/>
    <property type="match status" value="1"/>
</dbReference>
<dbReference type="Gene3D" id="1.10.150.530">
    <property type="match status" value="1"/>
</dbReference>
<dbReference type="Gene3D" id="3.20.20.70">
    <property type="entry name" value="Aldolase class I"/>
    <property type="match status" value="1"/>
</dbReference>
<dbReference type="HAMAP" id="MF_01849">
    <property type="entry name" value="RNA_methyltr_RlmN"/>
    <property type="match status" value="1"/>
</dbReference>
<dbReference type="InterPro" id="IPR013785">
    <property type="entry name" value="Aldolase_TIM"/>
</dbReference>
<dbReference type="InterPro" id="IPR040072">
    <property type="entry name" value="Methyltransferase_A"/>
</dbReference>
<dbReference type="InterPro" id="IPR048641">
    <property type="entry name" value="RlmN_N"/>
</dbReference>
<dbReference type="InterPro" id="IPR027492">
    <property type="entry name" value="RNA_MTrfase_RlmN"/>
</dbReference>
<dbReference type="InterPro" id="IPR004383">
    <property type="entry name" value="rRNA_lsu_MTrfase_RlmN/Cfr"/>
</dbReference>
<dbReference type="InterPro" id="IPR007197">
    <property type="entry name" value="rSAM"/>
</dbReference>
<dbReference type="NCBIfam" id="TIGR00048">
    <property type="entry name" value="rRNA_mod_RlmN"/>
    <property type="match status" value="1"/>
</dbReference>
<dbReference type="PANTHER" id="PTHR30544">
    <property type="entry name" value="23S RRNA METHYLTRANSFERASE"/>
    <property type="match status" value="1"/>
</dbReference>
<dbReference type="PANTHER" id="PTHR30544:SF5">
    <property type="entry name" value="RADICAL SAM CORE DOMAIN-CONTAINING PROTEIN"/>
    <property type="match status" value="1"/>
</dbReference>
<dbReference type="Pfam" id="PF04055">
    <property type="entry name" value="Radical_SAM"/>
    <property type="match status" value="1"/>
</dbReference>
<dbReference type="Pfam" id="PF21016">
    <property type="entry name" value="RlmN_N"/>
    <property type="match status" value="1"/>
</dbReference>
<dbReference type="PIRSF" id="PIRSF006004">
    <property type="entry name" value="CHP00048"/>
    <property type="match status" value="1"/>
</dbReference>
<dbReference type="SFLD" id="SFLDF00275">
    <property type="entry name" value="adenosine_C2_methyltransferase"/>
    <property type="match status" value="1"/>
</dbReference>
<dbReference type="SFLD" id="SFLDG01062">
    <property type="entry name" value="methyltransferase_(Class_A)"/>
    <property type="match status" value="1"/>
</dbReference>
<dbReference type="SUPFAM" id="SSF102114">
    <property type="entry name" value="Radical SAM enzymes"/>
    <property type="match status" value="1"/>
</dbReference>
<dbReference type="PROSITE" id="PS51918">
    <property type="entry name" value="RADICAL_SAM"/>
    <property type="match status" value="1"/>
</dbReference>
<accession>A7FW72</accession>
<evidence type="ECO:0000255" key="1">
    <source>
        <dbReference type="HAMAP-Rule" id="MF_01849"/>
    </source>
</evidence>
<evidence type="ECO:0000255" key="2">
    <source>
        <dbReference type="PROSITE-ProRule" id="PRU01266"/>
    </source>
</evidence>
<proteinExistence type="inferred from homology"/>
<gene>
    <name evidence="1" type="primary">rlmN</name>
    <name type="ordered locus">CLB_2379</name>
</gene>
<keyword id="KW-0004">4Fe-4S</keyword>
<keyword id="KW-0963">Cytoplasm</keyword>
<keyword id="KW-1015">Disulfide bond</keyword>
<keyword id="KW-0408">Iron</keyword>
<keyword id="KW-0411">Iron-sulfur</keyword>
<keyword id="KW-0479">Metal-binding</keyword>
<keyword id="KW-0489">Methyltransferase</keyword>
<keyword id="KW-0698">rRNA processing</keyword>
<keyword id="KW-0949">S-adenosyl-L-methionine</keyword>
<keyword id="KW-0808">Transferase</keyword>
<keyword id="KW-0819">tRNA processing</keyword>
<organism>
    <name type="scientific">Clostridium botulinum (strain ATCC 19397 / Type A)</name>
    <dbReference type="NCBI Taxonomy" id="441770"/>
    <lineage>
        <taxon>Bacteria</taxon>
        <taxon>Bacillati</taxon>
        <taxon>Bacillota</taxon>
        <taxon>Clostridia</taxon>
        <taxon>Eubacteriales</taxon>
        <taxon>Clostridiaceae</taxon>
        <taxon>Clostridium</taxon>
    </lineage>
</organism>
<reference key="1">
    <citation type="journal article" date="2007" name="PLoS ONE">
        <title>Analysis of the neurotoxin complex genes in Clostridium botulinum A1-A4 and B1 strains: BoNT/A3, /Ba4 and /B1 clusters are located within plasmids.</title>
        <authorList>
            <person name="Smith T.J."/>
            <person name="Hill K.K."/>
            <person name="Foley B.T."/>
            <person name="Detter J.C."/>
            <person name="Munk A.C."/>
            <person name="Bruce D.C."/>
            <person name="Doggett N.A."/>
            <person name="Smith L.A."/>
            <person name="Marks J.D."/>
            <person name="Xie G."/>
            <person name="Brettin T.S."/>
        </authorList>
    </citation>
    <scope>NUCLEOTIDE SEQUENCE [LARGE SCALE GENOMIC DNA]</scope>
    <source>
        <strain>ATCC 19397 / Type A</strain>
    </source>
</reference>